<protein>
    <recommendedName>
        <fullName>Uncharacterized protein L64</fullName>
    </recommendedName>
</protein>
<reference key="1">
    <citation type="journal article" date="2004" name="Science">
        <title>The 1.2-megabase genome sequence of Mimivirus.</title>
        <authorList>
            <person name="Raoult D."/>
            <person name="Audic S."/>
            <person name="Robert C."/>
            <person name="Abergel C."/>
            <person name="Renesto P."/>
            <person name="Ogata H."/>
            <person name="La Scola B."/>
            <person name="Susan M."/>
            <person name="Claverie J.-M."/>
        </authorList>
    </citation>
    <scope>NUCLEOTIDE SEQUENCE [LARGE SCALE GENOMIC DNA]</scope>
    <source>
        <strain>Rowbotham-Bradford</strain>
    </source>
</reference>
<keyword id="KW-1185">Reference proteome</keyword>
<accession>Q5UPE1</accession>
<proteinExistence type="predicted"/>
<sequence length="565" mass="67172">MLKKIGNDLSFFTGYLTFRTYDSIWRKATLPMYSKLKENLRKPTKTCLPQNDLDYRLRHTLIRQNARHYQSIKNTFINIPTFELNTFLKKEFHSNIILASPTLSFSILDYLNDGRIINSDKDIRKIVKKFRLIDSMTRLTDYNAYQLNPAIDILKILDDNTRNKLLGLFDDAIFYSLDIESFVTNFSDKKYYFQDCEAINKQFNYDVYGLYVPYDDNGKKRLQIETIILVDRRTDNTKTYVFQSNFSQWEIIRNNYINWTRTMSSVYEHQLGSNVYCQNTLYHMRKTLAKTHPITVLMKPFMEGVYFTNKVFTSFGISIADTENEVVNRYMDRVELFDLSNQTMIQALEYIHKTDGYKLLDYKKVYHENGVDDIYFEQKQLLEDLYQIVFDLVTNVFEYYYQSTDDYVKDNELRDFYLSIKNDLTFVEDLQQKDNAIKFFSNIIFLSSIRHSKNHINYAYLNSFYDYALRKTNFDLLLDKLDNGIPFDEKDCLSTVGDFYSKYSSGIYPSVPINLFGTGYKNLFADNEVQKFFTDVTNKLNQLKKNTERNNYTEFLFRLQNSNTI</sequence>
<organismHost>
    <name type="scientific">Acanthamoeba polyphaga</name>
    <name type="common">Amoeba</name>
    <dbReference type="NCBI Taxonomy" id="5757"/>
</organismHost>
<organism>
    <name type="scientific">Acanthamoeba polyphaga mimivirus</name>
    <name type="common">APMV</name>
    <dbReference type="NCBI Taxonomy" id="212035"/>
    <lineage>
        <taxon>Viruses</taxon>
        <taxon>Varidnaviria</taxon>
        <taxon>Bamfordvirae</taxon>
        <taxon>Nucleocytoviricota</taxon>
        <taxon>Megaviricetes</taxon>
        <taxon>Imitervirales</taxon>
        <taxon>Mimiviridae</taxon>
        <taxon>Megamimivirinae</taxon>
        <taxon>Mimivirus</taxon>
        <taxon>Mimivirus bradfordmassiliense</taxon>
    </lineage>
</organism>
<gene>
    <name type="ordered locus">MIMI_L64</name>
</gene>
<feature type="chain" id="PRO_0000253221" description="Uncharacterized protein L64">
    <location>
        <begin position="1"/>
        <end position="565"/>
    </location>
</feature>
<name>YL064_MIMIV</name>
<dbReference type="EMBL" id="AY653733">
    <property type="protein sequence ID" value="AAV50339.1"/>
    <property type="molecule type" value="Genomic_DNA"/>
</dbReference>
<dbReference type="KEGG" id="vg:9924656"/>
<dbReference type="Proteomes" id="UP000001134">
    <property type="component" value="Genome"/>
</dbReference>
<dbReference type="Gene3D" id="1.20.245.10">
    <property type="entry name" value="Lipoxygenase-1, Domain 5"/>
    <property type="match status" value="1"/>
</dbReference>
<dbReference type="InterPro" id="IPR036226">
    <property type="entry name" value="LipOase_C_sf"/>
</dbReference>
<dbReference type="SUPFAM" id="SSF48484">
    <property type="entry name" value="Lipoxigenase"/>
    <property type="match status" value="1"/>
</dbReference>